<name>Y1118_METJA</name>
<reference key="1">
    <citation type="journal article" date="1996" name="Science">
        <title>Complete genome sequence of the methanogenic archaeon, Methanococcus jannaschii.</title>
        <authorList>
            <person name="Bult C.J."/>
            <person name="White O."/>
            <person name="Olsen G.J."/>
            <person name="Zhou L."/>
            <person name="Fleischmann R.D."/>
            <person name="Sutton G.G."/>
            <person name="Blake J.A."/>
            <person name="FitzGerald L.M."/>
            <person name="Clayton R.A."/>
            <person name="Gocayne J.D."/>
            <person name="Kerlavage A.R."/>
            <person name="Dougherty B.A."/>
            <person name="Tomb J.-F."/>
            <person name="Adams M.D."/>
            <person name="Reich C.I."/>
            <person name="Overbeek R."/>
            <person name="Kirkness E.F."/>
            <person name="Weinstock K.G."/>
            <person name="Merrick J.M."/>
            <person name="Glodek A."/>
            <person name="Scott J.L."/>
            <person name="Geoghagen N.S.M."/>
            <person name="Weidman J.F."/>
            <person name="Fuhrmann J.L."/>
            <person name="Nguyen D."/>
            <person name="Utterback T.R."/>
            <person name="Kelley J.M."/>
            <person name="Peterson J.D."/>
            <person name="Sadow P.W."/>
            <person name="Hanna M.C."/>
            <person name="Cotton M.D."/>
            <person name="Roberts K.M."/>
            <person name="Hurst M.A."/>
            <person name="Kaine B.P."/>
            <person name="Borodovsky M."/>
            <person name="Klenk H.-P."/>
            <person name="Fraser C.M."/>
            <person name="Smith H.O."/>
            <person name="Woese C.R."/>
            <person name="Venter J.C."/>
        </authorList>
    </citation>
    <scope>NUCLEOTIDE SEQUENCE [LARGE SCALE GENOMIC DNA]</scope>
    <source>
        <strain>ATCC 43067 / DSM 2661 / JAL-1 / JCM 10045 / NBRC 100440</strain>
    </source>
</reference>
<organism>
    <name type="scientific">Methanocaldococcus jannaschii (strain ATCC 43067 / DSM 2661 / JAL-1 / JCM 10045 / NBRC 100440)</name>
    <name type="common">Methanococcus jannaschii</name>
    <dbReference type="NCBI Taxonomy" id="243232"/>
    <lineage>
        <taxon>Archaea</taxon>
        <taxon>Methanobacteriati</taxon>
        <taxon>Methanobacteriota</taxon>
        <taxon>Methanomada group</taxon>
        <taxon>Methanococci</taxon>
        <taxon>Methanococcales</taxon>
        <taxon>Methanocaldococcaceae</taxon>
        <taxon>Methanocaldococcus</taxon>
    </lineage>
</organism>
<proteinExistence type="predicted"/>
<protein>
    <recommendedName>
        <fullName>Uncharacterized protein MJ1118</fullName>
    </recommendedName>
</protein>
<keyword id="KW-1185">Reference proteome</keyword>
<sequence>MEKMPAKLLFERSIIGNKGSVIGKVKDIVFDEKVGRLVSLEVEPAEHSPIMREEGRNVLIPYKLVVAIKDVVVIDETNLNRVNIRVAEH</sequence>
<dbReference type="EMBL" id="L77117">
    <property type="protein sequence ID" value="AAB99119.1"/>
    <property type="molecule type" value="Genomic_DNA"/>
</dbReference>
<dbReference type="PIR" id="E64439">
    <property type="entry name" value="E64439"/>
</dbReference>
<dbReference type="RefSeq" id="WP_010870629.1">
    <property type="nucleotide sequence ID" value="NC_000909.1"/>
</dbReference>
<dbReference type="SMR" id="Q58518"/>
<dbReference type="FunCoup" id="Q58518">
    <property type="interactions" value="1"/>
</dbReference>
<dbReference type="STRING" id="243232.MJ_1118"/>
<dbReference type="PaxDb" id="243232-MJ_1118"/>
<dbReference type="EnsemblBacteria" id="AAB99119">
    <property type="protein sequence ID" value="AAB99119"/>
    <property type="gene ID" value="MJ_1118"/>
</dbReference>
<dbReference type="GeneID" id="1452014"/>
<dbReference type="KEGG" id="mja:MJ_1118"/>
<dbReference type="eggNOG" id="arCOG02155">
    <property type="taxonomic scope" value="Archaea"/>
</dbReference>
<dbReference type="HOGENOM" id="CLU_174517_0_0_2"/>
<dbReference type="InParanoid" id="Q58518"/>
<dbReference type="OrthoDB" id="85079at2157"/>
<dbReference type="PhylomeDB" id="Q58518"/>
<dbReference type="Proteomes" id="UP000000805">
    <property type="component" value="Chromosome"/>
</dbReference>
<dbReference type="Gene3D" id="2.30.30.240">
    <property type="entry name" value="PRC-barrel domain"/>
    <property type="match status" value="1"/>
</dbReference>
<dbReference type="InterPro" id="IPR027275">
    <property type="entry name" value="PRC-brl_dom"/>
</dbReference>
<dbReference type="InterPro" id="IPR011033">
    <property type="entry name" value="PRC_barrel-like_sf"/>
</dbReference>
<dbReference type="PANTHER" id="PTHR38137">
    <property type="entry name" value="PRC-BARREL DOMAIN PROTEIN"/>
    <property type="match status" value="1"/>
</dbReference>
<dbReference type="PANTHER" id="PTHR38137:SF2">
    <property type="entry name" value="PRC-BARREL DOMAIN-CONTAINING PROTEIN"/>
    <property type="match status" value="1"/>
</dbReference>
<dbReference type="Pfam" id="PF05239">
    <property type="entry name" value="PRC"/>
    <property type="match status" value="1"/>
</dbReference>
<dbReference type="SUPFAM" id="SSF50346">
    <property type="entry name" value="PRC-barrel domain"/>
    <property type="match status" value="1"/>
</dbReference>
<gene>
    <name type="ordered locus">MJ1118</name>
</gene>
<accession>Q58518</accession>
<feature type="chain" id="PRO_0000107175" description="Uncharacterized protein MJ1118">
    <location>
        <begin position="1"/>
        <end position="89"/>
    </location>
</feature>